<keyword id="KW-0963">Cytoplasm</keyword>
<keyword id="KW-0275">Fatty acid biosynthesis</keyword>
<keyword id="KW-0276">Fatty acid metabolism</keyword>
<keyword id="KW-0444">Lipid biosynthesis</keyword>
<keyword id="KW-0443">Lipid metabolism</keyword>
<keyword id="KW-0460">Magnesium</keyword>
<keyword id="KW-0479">Metal-binding</keyword>
<keyword id="KW-0808">Transferase</keyword>
<organism>
    <name type="scientific">Escherichia coli (strain SMS-3-5 / SECEC)</name>
    <dbReference type="NCBI Taxonomy" id="439855"/>
    <lineage>
        <taxon>Bacteria</taxon>
        <taxon>Pseudomonadati</taxon>
        <taxon>Pseudomonadota</taxon>
        <taxon>Gammaproteobacteria</taxon>
        <taxon>Enterobacterales</taxon>
        <taxon>Enterobacteriaceae</taxon>
        <taxon>Escherichia</taxon>
    </lineage>
</organism>
<protein>
    <recommendedName>
        <fullName evidence="1">Holo-[acyl-carrier-protein] synthase</fullName>
        <shortName evidence="1">Holo-ACP synthase</shortName>
        <ecNumber evidence="1">2.7.8.7</ecNumber>
    </recommendedName>
    <alternativeName>
        <fullName evidence="1">4'-phosphopantetheinyl transferase AcpS</fullName>
    </alternativeName>
</protein>
<feature type="chain" id="PRO_1000117352" description="Holo-[acyl-carrier-protein] synthase">
    <location>
        <begin position="1"/>
        <end position="126"/>
    </location>
</feature>
<feature type="binding site" evidence="1">
    <location>
        <position position="9"/>
    </location>
    <ligand>
        <name>Mg(2+)</name>
        <dbReference type="ChEBI" id="CHEBI:18420"/>
    </ligand>
</feature>
<feature type="binding site" evidence="1">
    <location>
        <position position="58"/>
    </location>
    <ligand>
        <name>Mg(2+)</name>
        <dbReference type="ChEBI" id="CHEBI:18420"/>
    </ligand>
</feature>
<evidence type="ECO:0000255" key="1">
    <source>
        <dbReference type="HAMAP-Rule" id="MF_00101"/>
    </source>
</evidence>
<dbReference type="EC" id="2.7.8.7" evidence="1"/>
<dbReference type="EMBL" id="CP000970">
    <property type="protein sequence ID" value="ACB20015.1"/>
    <property type="molecule type" value="Genomic_DNA"/>
</dbReference>
<dbReference type="RefSeq" id="WP_000986047.1">
    <property type="nucleotide sequence ID" value="NC_010498.1"/>
</dbReference>
<dbReference type="SMR" id="B1LP76"/>
<dbReference type="KEGG" id="ecm:EcSMS35_2716"/>
<dbReference type="HOGENOM" id="CLU_089696_3_1_6"/>
<dbReference type="Proteomes" id="UP000007011">
    <property type="component" value="Chromosome"/>
</dbReference>
<dbReference type="GO" id="GO:0005737">
    <property type="term" value="C:cytoplasm"/>
    <property type="evidence" value="ECO:0007669"/>
    <property type="project" value="UniProtKB-SubCell"/>
</dbReference>
<dbReference type="GO" id="GO:0008897">
    <property type="term" value="F:holo-[acyl-carrier-protein] synthase activity"/>
    <property type="evidence" value="ECO:0007669"/>
    <property type="project" value="UniProtKB-UniRule"/>
</dbReference>
<dbReference type="GO" id="GO:0000287">
    <property type="term" value="F:magnesium ion binding"/>
    <property type="evidence" value="ECO:0007669"/>
    <property type="project" value="UniProtKB-UniRule"/>
</dbReference>
<dbReference type="GO" id="GO:0006633">
    <property type="term" value="P:fatty acid biosynthetic process"/>
    <property type="evidence" value="ECO:0007669"/>
    <property type="project" value="UniProtKB-UniRule"/>
</dbReference>
<dbReference type="FunFam" id="3.90.470.20:FF:000001">
    <property type="entry name" value="Holo-[acyl-carrier-protein] synthase"/>
    <property type="match status" value="1"/>
</dbReference>
<dbReference type="Gene3D" id="3.90.470.20">
    <property type="entry name" value="4'-phosphopantetheinyl transferase domain"/>
    <property type="match status" value="1"/>
</dbReference>
<dbReference type="HAMAP" id="MF_00101">
    <property type="entry name" value="AcpS"/>
    <property type="match status" value="1"/>
</dbReference>
<dbReference type="InterPro" id="IPR008278">
    <property type="entry name" value="4-PPantetheinyl_Trfase_dom"/>
</dbReference>
<dbReference type="InterPro" id="IPR037143">
    <property type="entry name" value="4-PPantetheinyl_Trfase_dom_sf"/>
</dbReference>
<dbReference type="InterPro" id="IPR002582">
    <property type="entry name" value="ACPS"/>
</dbReference>
<dbReference type="InterPro" id="IPR004568">
    <property type="entry name" value="Ppantetheine-prot_Trfase_dom"/>
</dbReference>
<dbReference type="NCBIfam" id="TIGR00516">
    <property type="entry name" value="acpS"/>
    <property type="match status" value="1"/>
</dbReference>
<dbReference type="NCBIfam" id="TIGR00556">
    <property type="entry name" value="pantethn_trn"/>
    <property type="match status" value="1"/>
</dbReference>
<dbReference type="Pfam" id="PF01648">
    <property type="entry name" value="ACPS"/>
    <property type="match status" value="1"/>
</dbReference>
<dbReference type="SUPFAM" id="SSF56214">
    <property type="entry name" value="4'-phosphopantetheinyl transferase"/>
    <property type="match status" value="1"/>
</dbReference>
<proteinExistence type="inferred from homology"/>
<gene>
    <name evidence="1" type="primary">acpS</name>
    <name type="ordered locus">EcSMS35_2716</name>
</gene>
<reference key="1">
    <citation type="journal article" date="2008" name="J. Bacteriol.">
        <title>Insights into the environmental resistance gene pool from the genome sequence of the multidrug-resistant environmental isolate Escherichia coli SMS-3-5.</title>
        <authorList>
            <person name="Fricke W.F."/>
            <person name="Wright M.S."/>
            <person name="Lindell A.H."/>
            <person name="Harkins D.M."/>
            <person name="Baker-Austin C."/>
            <person name="Ravel J."/>
            <person name="Stepanauskas R."/>
        </authorList>
    </citation>
    <scope>NUCLEOTIDE SEQUENCE [LARGE SCALE GENOMIC DNA]</scope>
    <source>
        <strain>SMS-3-5 / SECEC</strain>
    </source>
</reference>
<sequence length="126" mass="14110">MAILGLGTDIVEIARIESVIARSGERLARRVLSDNEWAIWKTHHQPVRFLAKRFAVKEAAAKAFGTGIRNGLAFNQFEVFNDELGKPRLRLWGEALKLAEKLGVVNMHVTLADERHYACATVIIES</sequence>
<comment type="function">
    <text evidence="1">Transfers the 4'-phosphopantetheine moiety from coenzyme A to a Ser of acyl-carrier-protein.</text>
</comment>
<comment type="catalytic activity">
    <reaction evidence="1">
        <text>apo-[ACP] + CoA = holo-[ACP] + adenosine 3',5'-bisphosphate + H(+)</text>
        <dbReference type="Rhea" id="RHEA:12068"/>
        <dbReference type="Rhea" id="RHEA-COMP:9685"/>
        <dbReference type="Rhea" id="RHEA-COMP:9690"/>
        <dbReference type="ChEBI" id="CHEBI:15378"/>
        <dbReference type="ChEBI" id="CHEBI:29999"/>
        <dbReference type="ChEBI" id="CHEBI:57287"/>
        <dbReference type="ChEBI" id="CHEBI:58343"/>
        <dbReference type="ChEBI" id="CHEBI:64479"/>
        <dbReference type="EC" id="2.7.8.7"/>
    </reaction>
</comment>
<comment type="cofactor">
    <cofactor evidence="1">
        <name>Mg(2+)</name>
        <dbReference type="ChEBI" id="CHEBI:18420"/>
    </cofactor>
</comment>
<comment type="subcellular location">
    <subcellularLocation>
        <location evidence="1">Cytoplasm</location>
    </subcellularLocation>
</comment>
<comment type="similarity">
    <text evidence="1">Belongs to the P-Pant transferase superfamily. AcpS family.</text>
</comment>
<name>ACPS_ECOSM</name>
<accession>B1LP76</accession>